<evidence type="ECO:0000255" key="1">
    <source>
        <dbReference type="HAMAP-Rule" id="MF_01657"/>
    </source>
</evidence>
<keyword id="KW-0058">Aromatic hydrocarbons catabolism</keyword>
<keyword id="KW-0520">NAD</keyword>
<keyword id="KW-0560">Oxidoreductase</keyword>
<accession>B7MPB8</accession>
<name>ACDH_ECO81</name>
<gene>
    <name evidence="1" type="primary">mhpF</name>
    <name type="ordered locus">ECED1_0379</name>
</gene>
<protein>
    <recommendedName>
        <fullName evidence="1">Acetaldehyde dehydrogenase</fullName>
        <ecNumber evidence="1">1.2.1.10</ecNumber>
    </recommendedName>
    <alternativeName>
        <fullName evidence="1">Acetaldehyde dehydrogenase [acetylating]</fullName>
    </alternativeName>
</protein>
<sequence>MSKRKVAIIGSGNIGTDLMIKILRHGQHLEMAVMVGIDPQSDGLARARRMGVATTHEGVIGLMNMPEFADIDIVFDATSAGAHVKNDAALREAKPDIRLIDLTPAAIGPYCVPVVNLEENVDQLNVNMVTCGGQATIPMVAAVSRVARVHYAEIIASIASKSAGPGTRANIDEFTETTSRAIEVVGGAAKGKAIIVLNPAEPPLMMRDTVYVLSDEASQDDIEASINEMAEAVQAYVPGYRLKQRVQFEVIPQDKPVNLPGVGQFSGLKTAVWLEVEGAAHYLSAYAGNLDIMTSSALATAEKMAQSLARKAGEAA</sequence>
<dbReference type="EC" id="1.2.1.10" evidence="1"/>
<dbReference type="EMBL" id="CU928162">
    <property type="protein sequence ID" value="CAR06590.1"/>
    <property type="molecule type" value="Genomic_DNA"/>
</dbReference>
<dbReference type="RefSeq" id="WP_000044322.1">
    <property type="nucleotide sequence ID" value="NC_011745.1"/>
</dbReference>
<dbReference type="SMR" id="B7MPB8"/>
<dbReference type="KEGG" id="ecq:ECED1_0379"/>
<dbReference type="HOGENOM" id="CLU_062208_0_0_6"/>
<dbReference type="UniPathway" id="UPA00714"/>
<dbReference type="Proteomes" id="UP000000748">
    <property type="component" value="Chromosome"/>
</dbReference>
<dbReference type="GO" id="GO:0008774">
    <property type="term" value="F:acetaldehyde dehydrogenase (acetylating) activity"/>
    <property type="evidence" value="ECO:0007669"/>
    <property type="project" value="UniProtKB-UniRule"/>
</dbReference>
<dbReference type="GO" id="GO:0051287">
    <property type="term" value="F:NAD binding"/>
    <property type="evidence" value="ECO:0007669"/>
    <property type="project" value="UniProtKB-UniRule"/>
</dbReference>
<dbReference type="GO" id="GO:0019380">
    <property type="term" value="P:3-phenylpropionate catabolic process"/>
    <property type="evidence" value="ECO:0007669"/>
    <property type="project" value="UniProtKB-UniRule"/>
</dbReference>
<dbReference type="CDD" id="cd23933">
    <property type="entry name" value="ALDH_C"/>
    <property type="match status" value="1"/>
</dbReference>
<dbReference type="FunFam" id="3.30.360.10:FF:000021">
    <property type="entry name" value="Acetaldehyde dehydrogenase"/>
    <property type="match status" value="1"/>
</dbReference>
<dbReference type="Gene3D" id="3.30.360.10">
    <property type="entry name" value="Dihydrodipicolinate Reductase, domain 2"/>
    <property type="match status" value="1"/>
</dbReference>
<dbReference type="Gene3D" id="3.40.50.720">
    <property type="entry name" value="NAD(P)-binding Rossmann-like Domain"/>
    <property type="match status" value="1"/>
</dbReference>
<dbReference type="HAMAP" id="MF_01657">
    <property type="entry name" value="Ac_ald_DH_ac"/>
    <property type="match status" value="1"/>
</dbReference>
<dbReference type="InterPro" id="IPR003361">
    <property type="entry name" value="Acetaldehyde_dehydrogenase"/>
</dbReference>
<dbReference type="InterPro" id="IPR015426">
    <property type="entry name" value="Acetylaldehyde_DH_C"/>
</dbReference>
<dbReference type="InterPro" id="IPR036291">
    <property type="entry name" value="NAD(P)-bd_dom_sf"/>
</dbReference>
<dbReference type="InterPro" id="IPR000534">
    <property type="entry name" value="Semialdehyde_DH_NAD-bd"/>
</dbReference>
<dbReference type="NCBIfam" id="TIGR03215">
    <property type="entry name" value="ac_ald_DH_ac"/>
    <property type="match status" value="1"/>
</dbReference>
<dbReference type="NCBIfam" id="NF006157">
    <property type="entry name" value="PRK08300.1"/>
    <property type="match status" value="1"/>
</dbReference>
<dbReference type="Pfam" id="PF09290">
    <property type="entry name" value="AcetDehyd-dimer"/>
    <property type="match status" value="1"/>
</dbReference>
<dbReference type="Pfam" id="PF01118">
    <property type="entry name" value="Semialdhyde_dh"/>
    <property type="match status" value="1"/>
</dbReference>
<dbReference type="PIRSF" id="PIRSF015689">
    <property type="entry name" value="Actaldh_dh_actl"/>
    <property type="match status" value="1"/>
</dbReference>
<dbReference type="SMART" id="SM00859">
    <property type="entry name" value="Semialdhyde_dh"/>
    <property type="match status" value="1"/>
</dbReference>
<dbReference type="SUPFAM" id="SSF55347">
    <property type="entry name" value="Glyceraldehyde-3-phosphate dehydrogenase-like, C-terminal domain"/>
    <property type="match status" value="1"/>
</dbReference>
<dbReference type="SUPFAM" id="SSF51735">
    <property type="entry name" value="NAD(P)-binding Rossmann-fold domains"/>
    <property type="match status" value="1"/>
</dbReference>
<reference key="1">
    <citation type="journal article" date="2009" name="PLoS Genet.">
        <title>Organised genome dynamics in the Escherichia coli species results in highly diverse adaptive paths.</title>
        <authorList>
            <person name="Touchon M."/>
            <person name="Hoede C."/>
            <person name="Tenaillon O."/>
            <person name="Barbe V."/>
            <person name="Baeriswyl S."/>
            <person name="Bidet P."/>
            <person name="Bingen E."/>
            <person name="Bonacorsi S."/>
            <person name="Bouchier C."/>
            <person name="Bouvet O."/>
            <person name="Calteau A."/>
            <person name="Chiapello H."/>
            <person name="Clermont O."/>
            <person name="Cruveiller S."/>
            <person name="Danchin A."/>
            <person name="Diard M."/>
            <person name="Dossat C."/>
            <person name="Karoui M.E."/>
            <person name="Frapy E."/>
            <person name="Garry L."/>
            <person name="Ghigo J.M."/>
            <person name="Gilles A.M."/>
            <person name="Johnson J."/>
            <person name="Le Bouguenec C."/>
            <person name="Lescat M."/>
            <person name="Mangenot S."/>
            <person name="Martinez-Jehanne V."/>
            <person name="Matic I."/>
            <person name="Nassif X."/>
            <person name="Oztas S."/>
            <person name="Petit M.A."/>
            <person name="Pichon C."/>
            <person name="Rouy Z."/>
            <person name="Ruf C.S."/>
            <person name="Schneider D."/>
            <person name="Tourret J."/>
            <person name="Vacherie B."/>
            <person name="Vallenet D."/>
            <person name="Medigue C."/>
            <person name="Rocha E.P.C."/>
            <person name="Denamur E."/>
        </authorList>
    </citation>
    <scope>NUCLEOTIDE SEQUENCE [LARGE SCALE GENOMIC DNA]</scope>
    <source>
        <strain>ED1a</strain>
    </source>
</reference>
<feature type="chain" id="PRO_1000187032" description="Acetaldehyde dehydrogenase">
    <location>
        <begin position="1"/>
        <end position="316"/>
    </location>
</feature>
<feature type="active site" description="Acyl-thioester intermediate" evidence="1">
    <location>
        <position position="131"/>
    </location>
</feature>
<feature type="binding site" evidence="1">
    <location>
        <begin position="11"/>
        <end position="14"/>
    </location>
    <ligand>
        <name>NAD(+)</name>
        <dbReference type="ChEBI" id="CHEBI:57540"/>
    </ligand>
</feature>
<feature type="binding site" evidence="1">
    <location>
        <begin position="162"/>
        <end position="170"/>
    </location>
    <ligand>
        <name>NAD(+)</name>
        <dbReference type="ChEBI" id="CHEBI:57540"/>
    </ligand>
</feature>
<feature type="binding site" evidence="1">
    <location>
        <position position="289"/>
    </location>
    <ligand>
        <name>NAD(+)</name>
        <dbReference type="ChEBI" id="CHEBI:57540"/>
    </ligand>
</feature>
<proteinExistence type="inferred from homology"/>
<comment type="function">
    <text evidence="1">Catalyzes the conversion of acetaldehyde to acetyl-CoA, using NAD(+) and coenzyme A. Is the final enzyme in the meta-cleavage pathway for the degradation of aromatic compounds.</text>
</comment>
<comment type="catalytic activity">
    <reaction evidence="1">
        <text>acetaldehyde + NAD(+) + CoA = acetyl-CoA + NADH + H(+)</text>
        <dbReference type="Rhea" id="RHEA:23288"/>
        <dbReference type="ChEBI" id="CHEBI:15343"/>
        <dbReference type="ChEBI" id="CHEBI:15378"/>
        <dbReference type="ChEBI" id="CHEBI:57287"/>
        <dbReference type="ChEBI" id="CHEBI:57288"/>
        <dbReference type="ChEBI" id="CHEBI:57540"/>
        <dbReference type="ChEBI" id="CHEBI:57945"/>
        <dbReference type="EC" id="1.2.1.10"/>
    </reaction>
</comment>
<comment type="pathway">
    <text evidence="1">Aromatic compound metabolism; 3-phenylpropanoate degradation.</text>
</comment>
<comment type="subunit">
    <text evidence="1">Interacts with MhpE.</text>
</comment>
<comment type="similarity">
    <text evidence="1">Belongs to the acetaldehyde dehydrogenase family.</text>
</comment>
<organism>
    <name type="scientific">Escherichia coli O81 (strain ED1a)</name>
    <dbReference type="NCBI Taxonomy" id="585397"/>
    <lineage>
        <taxon>Bacteria</taxon>
        <taxon>Pseudomonadati</taxon>
        <taxon>Pseudomonadota</taxon>
        <taxon>Gammaproteobacteria</taxon>
        <taxon>Enterobacterales</taxon>
        <taxon>Enterobacteriaceae</taxon>
        <taxon>Escherichia</taxon>
    </lineage>
</organism>